<sequence>MKLQKPKGTADLLPAETAKWQYIEEIARGVFNDYNFKEIRTPMFESYELFSRATGETSDIVTKEMYDFEDKGGRHIALRPEGTASAVRAYIENKLYAPEVVKPVKLWYDAPMFRYERPQSGRLRQFHQFGVECLGLKNPAVDVEIIAMADTLFRQLGISGVKLSLNTLGDMESRKAYRQALIDYLTPFENQLSEDSRRRLNENPLRVLDSKEAEDIAIVKNAPAILDYLNETSKAYFEEVKALLEALNIEYTIDSNMVRGLDYYNDTIFEFIVNFDGKELTVCGGGRYDGLVEYFDGPATPAFGFGLGIERLLMIAEKQEINFIPEETLDVYIAVMGEKANLEATKLAESLREQAFKVERDFSNRKLGAQFKTAEKLGAELIITLGEDEVRTGQIKVKHNQTRKQVETTLQAVHESFAPIFEEIYADEIN</sequence>
<gene>
    <name evidence="1" type="primary">hisS</name>
    <name type="ordered locus">llmg_2217</name>
</gene>
<dbReference type="EC" id="6.1.1.21" evidence="1"/>
<dbReference type="EMBL" id="AM406671">
    <property type="protein sequence ID" value="CAL98784.1"/>
    <property type="molecule type" value="Genomic_DNA"/>
</dbReference>
<dbReference type="RefSeq" id="WP_011835908.1">
    <property type="nucleotide sequence ID" value="NC_009004.1"/>
</dbReference>
<dbReference type="SMR" id="A2RN96"/>
<dbReference type="STRING" id="416870.llmg_2217"/>
<dbReference type="GeneID" id="61110292"/>
<dbReference type="KEGG" id="llm:llmg_2217"/>
<dbReference type="eggNOG" id="COG0124">
    <property type="taxonomic scope" value="Bacteria"/>
</dbReference>
<dbReference type="HOGENOM" id="CLU_025113_1_1_9"/>
<dbReference type="OrthoDB" id="9800814at2"/>
<dbReference type="PhylomeDB" id="A2RN96"/>
<dbReference type="Proteomes" id="UP000000364">
    <property type="component" value="Chromosome"/>
</dbReference>
<dbReference type="GO" id="GO:0005737">
    <property type="term" value="C:cytoplasm"/>
    <property type="evidence" value="ECO:0007669"/>
    <property type="project" value="UniProtKB-SubCell"/>
</dbReference>
<dbReference type="GO" id="GO:0005524">
    <property type="term" value="F:ATP binding"/>
    <property type="evidence" value="ECO:0007669"/>
    <property type="project" value="UniProtKB-UniRule"/>
</dbReference>
<dbReference type="GO" id="GO:0140096">
    <property type="term" value="F:catalytic activity, acting on a protein"/>
    <property type="evidence" value="ECO:0007669"/>
    <property type="project" value="UniProtKB-ARBA"/>
</dbReference>
<dbReference type="GO" id="GO:0004821">
    <property type="term" value="F:histidine-tRNA ligase activity"/>
    <property type="evidence" value="ECO:0007669"/>
    <property type="project" value="UniProtKB-UniRule"/>
</dbReference>
<dbReference type="GO" id="GO:0016740">
    <property type="term" value="F:transferase activity"/>
    <property type="evidence" value="ECO:0007669"/>
    <property type="project" value="UniProtKB-ARBA"/>
</dbReference>
<dbReference type="GO" id="GO:0006427">
    <property type="term" value="P:histidyl-tRNA aminoacylation"/>
    <property type="evidence" value="ECO:0007669"/>
    <property type="project" value="UniProtKB-UniRule"/>
</dbReference>
<dbReference type="CDD" id="cd00773">
    <property type="entry name" value="HisRS-like_core"/>
    <property type="match status" value="1"/>
</dbReference>
<dbReference type="CDD" id="cd00859">
    <property type="entry name" value="HisRS_anticodon"/>
    <property type="match status" value="1"/>
</dbReference>
<dbReference type="FunFam" id="3.30.930.10:FF:000005">
    <property type="entry name" value="Histidine--tRNA ligase"/>
    <property type="match status" value="1"/>
</dbReference>
<dbReference type="Gene3D" id="3.40.50.800">
    <property type="entry name" value="Anticodon-binding domain"/>
    <property type="match status" value="1"/>
</dbReference>
<dbReference type="Gene3D" id="3.30.930.10">
    <property type="entry name" value="Bira Bifunctional Protein, Domain 2"/>
    <property type="match status" value="1"/>
</dbReference>
<dbReference type="HAMAP" id="MF_00127">
    <property type="entry name" value="His_tRNA_synth"/>
    <property type="match status" value="1"/>
</dbReference>
<dbReference type="InterPro" id="IPR006195">
    <property type="entry name" value="aa-tRNA-synth_II"/>
</dbReference>
<dbReference type="InterPro" id="IPR045864">
    <property type="entry name" value="aa-tRNA-synth_II/BPL/LPL"/>
</dbReference>
<dbReference type="InterPro" id="IPR004154">
    <property type="entry name" value="Anticodon-bd"/>
</dbReference>
<dbReference type="InterPro" id="IPR036621">
    <property type="entry name" value="Anticodon-bd_dom_sf"/>
</dbReference>
<dbReference type="InterPro" id="IPR015807">
    <property type="entry name" value="His-tRNA-ligase"/>
</dbReference>
<dbReference type="InterPro" id="IPR041715">
    <property type="entry name" value="HisRS-like_core"/>
</dbReference>
<dbReference type="InterPro" id="IPR004516">
    <property type="entry name" value="HisRS/HisZ"/>
</dbReference>
<dbReference type="InterPro" id="IPR033656">
    <property type="entry name" value="HisRS_anticodon"/>
</dbReference>
<dbReference type="NCBIfam" id="TIGR00442">
    <property type="entry name" value="hisS"/>
    <property type="match status" value="1"/>
</dbReference>
<dbReference type="PANTHER" id="PTHR43707:SF1">
    <property type="entry name" value="HISTIDINE--TRNA LIGASE, MITOCHONDRIAL-RELATED"/>
    <property type="match status" value="1"/>
</dbReference>
<dbReference type="PANTHER" id="PTHR43707">
    <property type="entry name" value="HISTIDYL-TRNA SYNTHETASE"/>
    <property type="match status" value="1"/>
</dbReference>
<dbReference type="Pfam" id="PF03129">
    <property type="entry name" value="HGTP_anticodon"/>
    <property type="match status" value="1"/>
</dbReference>
<dbReference type="Pfam" id="PF13393">
    <property type="entry name" value="tRNA-synt_His"/>
    <property type="match status" value="1"/>
</dbReference>
<dbReference type="PIRSF" id="PIRSF001549">
    <property type="entry name" value="His-tRNA_synth"/>
    <property type="match status" value="1"/>
</dbReference>
<dbReference type="SUPFAM" id="SSF52954">
    <property type="entry name" value="Class II aaRS ABD-related"/>
    <property type="match status" value="1"/>
</dbReference>
<dbReference type="SUPFAM" id="SSF55681">
    <property type="entry name" value="Class II aaRS and biotin synthetases"/>
    <property type="match status" value="1"/>
</dbReference>
<dbReference type="PROSITE" id="PS50862">
    <property type="entry name" value="AA_TRNA_LIGASE_II"/>
    <property type="match status" value="1"/>
</dbReference>
<name>SYH_LACLM</name>
<feature type="chain" id="PRO_1000016380" description="Histidine--tRNA ligase">
    <location>
        <begin position="1"/>
        <end position="430"/>
    </location>
</feature>
<organism>
    <name type="scientific">Lactococcus lactis subsp. cremoris (strain MG1363)</name>
    <dbReference type="NCBI Taxonomy" id="416870"/>
    <lineage>
        <taxon>Bacteria</taxon>
        <taxon>Bacillati</taxon>
        <taxon>Bacillota</taxon>
        <taxon>Bacilli</taxon>
        <taxon>Lactobacillales</taxon>
        <taxon>Streptococcaceae</taxon>
        <taxon>Lactococcus</taxon>
        <taxon>Lactococcus cremoris subsp. cremoris</taxon>
    </lineage>
</organism>
<keyword id="KW-0030">Aminoacyl-tRNA synthetase</keyword>
<keyword id="KW-0067">ATP-binding</keyword>
<keyword id="KW-0963">Cytoplasm</keyword>
<keyword id="KW-0436">Ligase</keyword>
<keyword id="KW-0547">Nucleotide-binding</keyword>
<keyword id="KW-0648">Protein biosynthesis</keyword>
<evidence type="ECO:0000255" key="1">
    <source>
        <dbReference type="HAMAP-Rule" id="MF_00127"/>
    </source>
</evidence>
<proteinExistence type="inferred from homology"/>
<accession>A2RN96</accession>
<protein>
    <recommendedName>
        <fullName evidence="1">Histidine--tRNA ligase</fullName>
        <ecNumber evidence="1">6.1.1.21</ecNumber>
    </recommendedName>
    <alternativeName>
        <fullName evidence="1">Histidyl-tRNA synthetase</fullName>
        <shortName evidence="1">HisRS</shortName>
    </alternativeName>
</protein>
<reference key="1">
    <citation type="journal article" date="2007" name="J. Bacteriol.">
        <title>The complete genome sequence of the lactic acid bacterial paradigm Lactococcus lactis subsp. cremoris MG1363.</title>
        <authorList>
            <person name="Wegmann U."/>
            <person name="O'Connell-Motherway M."/>
            <person name="Zomer A."/>
            <person name="Buist G."/>
            <person name="Shearman C."/>
            <person name="Canchaya C."/>
            <person name="Ventura M."/>
            <person name="Goesmann A."/>
            <person name="Gasson M.J."/>
            <person name="Kuipers O.P."/>
            <person name="van Sinderen D."/>
            <person name="Kok J."/>
        </authorList>
    </citation>
    <scope>NUCLEOTIDE SEQUENCE [LARGE SCALE GENOMIC DNA]</scope>
    <source>
        <strain>MG1363</strain>
    </source>
</reference>
<comment type="catalytic activity">
    <reaction evidence="1">
        <text>tRNA(His) + L-histidine + ATP = L-histidyl-tRNA(His) + AMP + diphosphate + H(+)</text>
        <dbReference type="Rhea" id="RHEA:17313"/>
        <dbReference type="Rhea" id="RHEA-COMP:9665"/>
        <dbReference type="Rhea" id="RHEA-COMP:9689"/>
        <dbReference type="ChEBI" id="CHEBI:15378"/>
        <dbReference type="ChEBI" id="CHEBI:30616"/>
        <dbReference type="ChEBI" id="CHEBI:33019"/>
        <dbReference type="ChEBI" id="CHEBI:57595"/>
        <dbReference type="ChEBI" id="CHEBI:78442"/>
        <dbReference type="ChEBI" id="CHEBI:78527"/>
        <dbReference type="ChEBI" id="CHEBI:456215"/>
        <dbReference type="EC" id="6.1.1.21"/>
    </reaction>
</comment>
<comment type="subunit">
    <text evidence="1">Homodimer.</text>
</comment>
<comment type="subcellular location">
    <subcellularLocation>
        <location evidence="1">Cytoplasm</location>
    </subcellularLocation>
</comment>
<comment type="similarity">
    <text evidence="1">Belongs to the class-II aminoacyl-tRNA synthetase family.</text>
</comment>